<comment type="catalytic activity">
    <reaction>
        <text>(6S)-5-methyl-5,6,7,8-tetrahydrofolate + NADP(+) = (6R)-5,10-methylene-5,6,7,8-tetrahydrofolate + NADPH + H(+)</text>
        <dbReference type="Rhea" id="RHEA:19817"/>
        <dbReference type="ChEBI" id="CHEBI:15378"/>
        <dbReference type="ChEBI" id="CHEBI:15636"/>
        <dbReference type="ChEBI" id="CHEBI:18608"/>
        <dbReference type="ChEBI" id="CHEBI:57783"/>
        <dbReference type="ChEBI" id="CHEBI:58349"/>
        <dbReference type="EC" id="1.5.1.20"/>
    </reaction>
</comment>
<comment type="catalytic activity">
    <reaction>
        <text>(6S)-5-methyl-5,6,7,8-tetrahydrofolate + NAD(+) = (6R)-5,10-methylene-5,6,7,8-tetrahydrofolate + NADH + H(+)</text>
        <dbReference type="Rhea" id="RHEA:19821"/>
        <dbReference type="ChEBI" id="CHEBI:15378"/>
        <dbReference type="ChEBI" id="CHEBI:15636"/>
        <dbReference type="ChEBI" id="CHEBI:18608"/>
        <dbReference type="ChEBI" id="CHEBI:57540"/>
        <dbReference type="ChEBI" id="CHEBI:57945"/>
        <dbReference type="EC" id="1.5.1.20"/>
    </reaction>
</comment>
<comment type="cofactor">
    <cofactor evidence="1">
        <name>FAD</name>
        <dbReference type="ChEBI" id="CHEBI:57692"/>
    </cofactor>
</comment>
<comment type="pathway">
    <text>One-carbon metabolism; tetrahydrofolate interconversion.</text>
</comment>
<comment type="interaction">
    <interactant intactId="EBI-11567">
        <id>P46151</id>
    </interactant>
    <interactant intactId="EBI-11572">
        <id>P53128</id>
        <label>MET13</label>
    </interactant>
    <organismsDiffer>false</organismsDiffer>
    <experiments>2</experiments>
</comment>
<comment type="similarity">
    <text evidence="3">Belongs to the methylenetetrahydrofolate reductase family.</text>
</comment>
<dbReference type="EC" id="1.5.1.20"/>
<dbReference type="EMBL" id="U36624">
    <property type="protein sequence ID" value="AAB68164.1"/>
    <property type="molecule type" value="Genomic_DNA"/>
</dbReference>
<dbReference type="EMBL" id="K02070">
    <property type="status" value="NOT_ANNOTATED_CDS"/>
    <property type="molecule type" value="Genomic_DNA"/>
</dbReference>
<dbReference type="EMBL" id="BK006949">
    <property type="protein sequence ID" value="DAA11405.1"/>
    <property type="molecule type" value="Genomic_DNA"/>
</dbReference>
<dbReference type="PIR" id="S63459">
    <property type="entry name" value="S63459"/>
</dbReference>
<dbReference type="RefSeq" id="NP_015302.1">
    <property type="nucleotide sequence ID" value="NM_001183837.1"/>
</dbReference>
<dbReference type="PDB" id="6FNU">
    <property type="method" value="X-ray"/>
    <property type="resolution" value="1.56 A"/>
    <property type="chains" value="A=1-302"/>
</dbReference>
<dbReference type="PDBsum" id="6FNU"/>
<dbReference type="SMR" id="P46151"/>
<dbReference type="BioGRID" id="36154">
    <property type="interactions" value="143"/>
</dbReference>
<dbReference type="DIP" id="DIP-2825N"/>
<dbReference type="FunCoup" id="P46151">
    <property type="interactions" value="54"/>
</dbReference>
<dbReference type="IntAct" id="P46151">
    <property type="interactions" value="6"/>
</dbReference>
<dbReference type="MINT" id="P46151"/>
<dbReference type="STRING" id="4932.YPL023C"/>
<dbReference type="iPTMnet" id="P46151"/>
<dbReference type="PaxDb" id="4932-YPL023C"/>
<dbReference type="PeptideAtlas" id="P46151"/>
<dbReference type="EnsemblFungi" id="YPL023C_mRNA">
    <property type="protein sequence ID" value="YPL023C"/>
    <property type="gene ID" value="YPL023C"/>
</dbReference>
<dbReference type="GeneID" id="856084"/>
<dbReference type="KEGG" id="sce:YPL023C"/>
<dbReference type="AGR" id="SGD:S000005944"/>
<dbReference type="SGD" id="S000005944">
    <property type="gene designation" value="MET12"/>
</dbReference>
<dbReference type="VEuPathDB" id="FungiDB:YPL023C"/>
<dbReference type="eggNOG" id="KOG0564">
    <property type="taxonomic scope" value="Eukaryota"/>
</dbReference>
<dbReference type="HOGENOM" id="CLU_025841_2_2_1"/>
<dbReference type="InParanoid" id="P46151"/>
<dbReference type="OMA" id="GLMPINS"/>
<dbReference type="OrthoDB" id="16284at2759"/>
<dbReference type="BioCyc" id="YEAST:YPL023C-MONOMER"/>
<dbReference type="UniPathway" id="UPA00193"/>
<dbReference type="BioGRID-ORCS" id="856084">
    <property type="hits" value="4 hits in 10 CRISPR screens"/>
</dbReference>
<dbReference type="PRO" id="PR:P46151"/>
<dbReference type="Proteomes" id="UP000002311">
    <property type="component" value="Chromosome XVI"/>
</dbReference>
<dbReference type="RNAct" id="P46151">
    <property type="molecule type" value="protein"/>
</dbReference>
<dbReference type="GO" id="GO:0071949">
    <property type="term" value="F:FAD binding"/>
    <property type="evidence" value="ECO:0000318"/>
    <property type="project" value="GO_Central"/>
</dbReference>
<dbReference type="GO" id="GO:0004489">
    <property type="term" value="F:methylenetetrahydrofolate reductase (NAD(P)H) activity"/>
    <property type="evidence" value="ECO:0000314"/>
    <property type="project" value="SGD"/>
</dbReference>
<dbReference type="GO" id="GO:0106312">
    <property type="term" value="F:methylenetetrahydrofolate reductase (NADH) activity"/>
    <property type="evidence" value="ECO:0007669"/>
    <property type="project" value="RHEA"/>
</dbReference>
<dbReference type="GO" id="GO:0106313">
    <property type="term" value="F:methylenetetrahydrofolate reductase (NADPH) activity"/>
    <property type="evidence" value="ECO:0007669"/>
    <property type="project" value="RHEA"/>
</dbReference>
<dbReference type="GO" id="GO:0009086">
    <property type="term" value="P:methionine biosynthetic process"/>
    <property type="evidence" value="ECO:0000318"/>
    <property type="project" value="GO_Central"/>
</dbReference>
<dbReference type="GO" id="GO:0035999">
    <property type="term" value="P:tetrahydrofolate interconversion"/>
    <property type="evidence" value="ECO:0000314"/>
    <property type="project" value="SGD"/>
</dbReference>
<dbReference type="CDD" id="cd00537">
    <property type="entry name" value="MTHFR"/>
    <property type="match status" value="1"/>
</dbReference>
<dbReference type="FunFam" id="3.20.20.220:FF:000002">
    <property type="entry name" value="Methylenetetrahydrofolate reductase"/>
    <property type="match status" value="1"/>
</dbReference>
<dbReference type="Gene3D" id="3.20.20.220">
    <property type="match status" value="1"/>
</dbReference>
<dbReference type="InterPro" id="IPR029041">
    <property type="entry name" value="FAD-linked_oxidoreductase-like"/>
</dbReference>
<dbReference type="InterPro" id="IPR004621">
    <property type="entry name" value="Fadh2_euk"/>
</dbReference>
<dbReference type="InterPro" id="IPR003171">
    <property type="entry name" value="Mehydrof_redctse-like"/>
</dbReference>
<dbReference type="InterPro" id="IPR053806">
    <property type="entry name" value="MTHFR_C"/>
</dbReference>
<dbReference type="NCBIfam" id="TIGR00677">
    <property type="entry name" value="fadh2_euk"/>
    <property type="match status" value="1"/>
</dbReference>
<dbReference type="PANTHER" id="PTHR45754">
    <property type="entry name" value="METHYLENETETRAHYDROFOLATE REDUCTASE"/>
    <property type="match status" value="1"/>
</dbReference>
<dbReference type="PANTHER" id="PTHR45754:SF1">
    <property type="entry name" value="METHYLENETETRAHYDROFOLATE REDUCTASE 1"/>
    <property type="match status" value="1"/>
</dbReference>
<dbReference type="Pfam" id="PF02219">
    <property type="entry name" value="MTHFR"/>
    <property type="match status" value="1"/>
</dbReference>
<dbReference type="Pfam" id="PF21895">
    <property type="entry name" value="MTHFR_C"/>
    <property type="match status" value="1"/>
</dbReference>
<dbReference type="SUPFAM" id="SSF51730">
    <property type="entry name" value="FAD-linked oxidoreductase"/>
    <property type="match status" value="1"/>
</dbReference>
<sequence>MSIRDLYHARASPFISLEFFPPKTELGTRNLMERMHRMTALDPLFITVTWGAGGTTAEKTLTLASLAQQTLNIPVCMHLTCTNTEKAIIDDALDRCYNAGIRNILALRGDPPIGEDWLDSQSNESPFKYAVDLVRYIKQSYGDKFCVGVAAYPEGHCEGEAEGHEQDPLKDLVYLKEKVEAGADFVITQLFYDVEKFLTFEMLFRERISQDLPLFPGLMPINSYLLFHRAAKLSHASIPPAILSRFPPEIQSDDNAVKSIGVDILIELIQEIYQRTSGRIKGFHFYTLNLEKAIAQIVSQSPVLSHIVNESSEEEGEDETSGEIGSIENVPIEDADGDIVLDDSNEETVANRKRRRHSSLDSAKLIFNRAIVTEKGLRYNNENGSMPSKKALISISKGHGTLGRDATWDEFPNGRFGDSRSPAYGEIDGYGPSIKVSKSKALELWGIPKTIGDLKDIFIKYLEGSTDAIPWSDLGLSAETALIQEELIQLNYRGYLTLASQPATNATLSSDKIFGWGPAKGRLYQKAFVEMFIHRQQWETTLKPKLDHYGRRKFSYYAGDSSGSFETNLDPHSSSVVTWGVFPNSPVKQTTIIEEESFKAWRDEAFSIWSEWAKLFPRNTPANILLRLVHKDYCLVSIVHHDFKETDELWEMLLDQA</sequence>
<name>MTHR1_YEAST</name>
<feature type="chain" id="PRO_0000190255" description="Methylenetetrahydrofolate reductase 1">
    <location>
        <begin position="1"/>
        <end position="657"/>
    </location>
</feature>
<feature type="region of interest" description="Disordered" evidence="2">
    <location>
        <begin position="308"/>
        <end position="329"/>
    </location>
</feature>
<feature type="compositionally biased region" description="Acidic residues" evidence="2">
    <location>
        <begin position="311"/>
        <end position="321"/>
    </location>
</feature>
<feature type="active site" description="Proton donor/acceptor" evidence="1">
    <location>
        <position position="18"/>
    </location>
</feature>
<feature type="binding site" evidence="1">
    <location>
        <begin position="18"/>
        <end position="23"/>
    </location>
    <ligand>
        <name>NAD(+)</name>
        <dbReference type="ChEBI" id="CHEBI:57540"/>
    </ligand>
</feature>
<feature type="binding site" evidence="1">
    <location>
        <begin position="49"/>
        <end position="50"/>
    </location>
    <ligand>
        <name>FAD</name>
        <dbReference type="ChEBI" id="CHEBI:57692"/>
    </ligand>
</feature>
<feature type="binding site" evidence="1">
    <location>
        <begin position="49"/>
        <end position="50"/>
    </location>
    <ligand>
        <name>NAD(+)</name>
        <dbReference type="ChEBI" id="CHEBI:57540"/>
    </ligand>
</feature>
<feature type="binding site" evidence="1">
    <location>
        <position position="78"/>
    </location>
    <ligand>
        <name>FAD</name>
        <dbReference type="ChEBI" id="CHEBI:57692"/>
    </ligand>
</feature>
<feature type="binding site" evidence="1">
    <location>
        <begin position="108"/>
        <end position="110"/>
    </location>
    <ligand>
        <name>FAD</name>
        <dbReference type="ChEBI" id="CHEBI:57692"/>
    </ligand>
</feature>
<feature type="binding site" evidence="1">
    <location>
        <position position="110"/>
    </location>
    <ligand>
        <name>substrate</name>
    </ligand>
</feature>
<feature type="binding site" evidence="1">
    <location>
        <begin position="129"/>
        <end position="130"/>
    </location>
    <ligand>
        <name>FAD</name>
        <dbReference type="ChEBI" id="CHEBI:57692"/>
    </ligand>
</feature>
<feature type="binding site" evidence="1">
    <location>
        <position position="152"/>
    </location>
    <ligand>
        <name>FAD</name>
        <dbReference type="ChEBI" id="CHEBI:57692"/>
    </ligand>
</feature>
<feature type="binding site" evidence="1">
    <location>
        <position position="171"/>
    </location>
    <ligand>
        <name>FAD</name>
        <dbReference type="ChEBI" id="CHEBI:57692"/>
    </ligand>
</feature>
<feature type="binding site" evidence="1">
    <location>
        <position position="178"/>
    </location>
    <ligand>
        <name>FAD</name>
        <dbReference type="ChEBI" id="CHEBI:57692"/>
    </ligand>
</feature>
<feature type="binding site" evidence="1">
    <location>
        <position position="189"/>
    </location>
    <ligand>
        <name>substrate</name>
    </ligand>
</feature>
<feature type="binding site" evidence="1">
    <location>
        <position position="286"/>
    </location>
    <ligand>
        <name>substrate</name>
    </ligand>
</feature>
<feature type="modified residue" description="Phosphoserine" evidence="4">
    <location>
        <position position="120"/>
    </location>
</feature>
<feature type="modified residue" description="Phosphoserine" evidence="4">
    <location>
        <position position="301"/>
    </location>
</feature>
<feature type="modified residue" description="Phosphoserine" evidence="5">
    <location>
        <position position="358"/>
    </location>
</feature>
<feature type="sequence conflict" description="In Ref. 3; K02070." evidence="3" ref="3">
    <original>DP</original>
    <variation>NL</variation>
    <location>
        <begin position="110"/>
        <end position="111"/>
    </location>
</feature>
<feature type="sequence conflict" description="In Ref. 3; K02070." evidence="3" ref="3">
    <original>ED</original>
    <variation>VV</variation>
    <location>
        <begin position="115"/>
        <end position="116"/>
    </location>
</feature>
<feature type="sequence conflict" description="In Ref. 3; K02070." evidence="3" ref="3">
    <original>D</original>
    <variation>V</variation>
    <location>
        <position position="119"/>
    </location>
</feature>
<feature type="sequence conflict" description="In Ref. 3; K02070." evidence="3" ref="3">
    <original>ESPFKYAV</original>
    <variation>RLLNMRLF</variation>
    <location>
        <begin position="124"/>
        <end position="131"/>
    </location>
</feature>
<feature type="helix" evidence="6">
    <location>
        <begin position="3"/>
        <end position="9"/>
    </location>
</feature>
<feature type="strand" evidence="6">
    <location>
        <begin position="14"/>
        <end position="19"/>
    </location>
</feature>
<feature type="helix" evidence="6">
    <location>
        <begin position="25"/>
        <end position="38"/>
    </location>
</feature>
<feature type="helix" evidence="6">
    <location>
        <begin position="39"/>
        <end position="41"/>
    </location>
</feature>
<feature type="strand" evidence="6">
    <location>
        <begin position="46"/>
        <end position="48"/>
    </location>
</feature>
<feature type="helix" evidence="6">
    <location>
        <begin position="52"/>
        <end position="54"/>
    </location>
</feature>
<feature type="helix" evidence="6">
    <location>
        <begin position="57"/>
        <end position="71"/>
    </location>
</feature>
<feature type="strand" evidence="6">
    <location>
        <begin position="75"/>
        <end position="80"/>
    </location>
</feature>
<feature type="helix" evidence="6">
    <location>
        <begin position="86"/>
        <end position="98"/>
    </location>
</feature>
<feature type="strand" evidence="6">
    <location>
        <begin position="103"/>
        <end position="107"/>
    </location>
</feature>
<feature type="helix" evidence="6">
    <location>
        <begin position="116"/>
        <end position="118"/>
    </location>
</feature>
<feature type="helix" evidence="6">
    <location>
        <begin position="130"/>
        <end position="141"/>
    </location>
</feature>
<feature type="helix" evidence="6">
    <location>
        <begin position="142"/>
        <end position="144"/>
    </location>
</feature>
<feature type="strand" evidence="6">
    <location>
        <begin position="145"/>
        <end position="151"/>
    </location>
</feature>
<feature type="helix" evidence="6">
    <location>
        <begin position="168"/>
        <end position="180"/>
    </location>
</feature>
<feature type="strand" evidence="6">
    <location>
        <begin position="185"/>
        <end position="190"/>
    </location>
</feature>
<feature type="helix" evidence="6">
    <location>
        <begin position="194"/>
        <end position="207"/>
    </location>
</feature>
<feature type="strand" evidence="6">
    <location>
        <begin position="210"/>
        <end position="212"/>
    </location>
</feature>
<feature type="strand" evidence="6">
    <location>
        <begin position="214"/>
        <end position="218"/>
    </location>
</feature>
<feature type="helix" evidence="6">
    <location>
        <begin position="224"/>
        <end position="234"/>
    </location>
</feature>
<feature type="helix" evidence="6">
    <location>
        <begin position="240"/>
        <end position="243"/>
    </location>
</feature>
<feature type="helix" evidence="6">
    <location>
        <begin position="248"/>
        <end position="251"/>
    </location>
</feature>
<feature type="helix" evidence="6">
    <location>
        <begin position="254"/>
        <end position="275"/>
    </location>
</feature>
<feature type="turn" evidence="6">
    <location>
        <begin position="276"/>
        <end position="278"/>
    </location>
</feature>
<feature type="strand" evidence="6">
    <location>
        <begin position="282"/>
        <end position="286"/>
    </location>
</feature>
<feature type="helix" evidence="6">
    <location>
        <begin position="292"/>
        <end position="300"/>
    </location>
</feature>
<reference key="1">
    <citation type="journal article" date="1997" name="Nature">
        <title>The nucleotide sequence of Saccharomyces cerevisiae chromosome XVI.</title>
        <authorList>
            <person name="Bussey H."/>
            <person name="Storms R.K."/>
            <person name="Ahmed A."/>
            <person name="Albermann K."/>
            <person name="Allen E."/>
            <person name="Ansorge W."/>
            <person name="Araujo R."/>
            <person name="Aparicio A."/>
            <person name="Barrell B.G."/>
            <person name="Badcock K."/>
            <person name="Benes V."/>
            <person name="Botstein D."/>
            <person name="Bowman S."/>
            <person name="Brueckner M."/>
            <person name="Carpenter J."/>
            <person name="Cherry J.M."/>
            <person name="Chung E."/>
            <person name="Churcher C.M."/>
            <person name="Coster F."/>
            <person name="Davis K."/>
            <person name="Davis R.W."/>
            <person name="Dietrich F.S."/>
            <person name="Delius H."/>
            <person name="DiPaolo T."/>
            <person name="Dubois E."/>
            <person name="Duesterhoeft A."/>
            <person name="Duncan M."/>
            <person name="Floeth M."/>
            <person name="Fortin N."/>
            <person name="Friesen J.D."/>
            <person name="Fritz C."/>
            <person name="Goffeau A."/>
            <person name="Hall J."/>
            <person name="Hebling U."/>
            <person name="Heumann K."/>
            <person name="Hilbert H."/>
            <person name="Hillier L.W."/>
            <person name="Hunicke-Smith S."/>
            <person name="Hyman R.W."/>
            <person name="Johnston M."/>
            <person name="Kalman S."/>
            <person name="Kleine K."/>
            <person name="Komp C."/>
            <person name="Kurdi O."/>
            <person name="Lashkari D."/>
            <person name="Lew H."/>
            <person name="Lin A."/>
            <person name="Lin D."/>
            <person name="Louis E.J."/>
            <person name="Marathe R."/>
            <person name="Messenguy F."/>
            <person name="Mewes H.-W."/>
            <person name="Mirtipati S."/>
            <person name="Moestl D."/>
            <person name="Mueller-Auer S."/>
            <person name="Namath A."/>
            <person name="Nentwich U."/>
            <person name="Oefner P."/>
            <person name="Pearson D."/>
            <person name="Petel F.X."/>
            <person name="Pohl T.M."/>
            <person name="Purnelle B."/>
            <person name="Rajandream M.A."/>
            <person name="Rechmann S."/>
            <person name="Rieger M."/>
            <person name="Riles L."/>
            <person name="Roberts D."/>
            <person name="Schaefer M."/>
            <person name="Scharfe M."/>
            <person name="Scherens B."/>
            <person name="Schramm S."/>
            <person name="Schroeder M."/>
            <person name="Sdicu A.-M."/>
            <person name="Tettelin H."/>
            <person name="Urrestarazu L.A."/>
            <person name="Ushinsky S."/>
            <person name="Vierendeels F."/>
            <person name="Vissers S."/>
            <person name="Voss H."/>
            <person name="Walsh S.V."/>
            <person name="Wambutt R."/>
            <person name="Wang Y."/>
            <person name="Wedler E."/>
            <person name="Wedler H."/>
            <person name="Winnett E."/>
            <person name="Zhong W.-W."/>
            <person name="Zollner A."/>
            <person name="Vo D.H."/>
            <person name="Hani J."/>
        </authorList>
    </citation>
    <scope>NUCLEOTIDE SEQUENCE [LARGE SCALE GENOMIC DNA]</scope>
    <source>
        <strain>ATCC 204508 / S288c</strain>
    </source>
</reference>
<reference key="2">
    <citation type="journal article" date="2014" name="G3 (Bethesda)">
        <title>The reference genome sequence of Saccharomyces cerevisiae: Then and now.</title>
        <authorList>
            <person name="Engel S.R."/>
            <person name="Dietrich F.S."/>
            <person name="Fisk D.G."/>
            <person name="Binkley G."/>
            <person name="Balakrishnan R."/>
            <person name="Costanzo M.C."/>
            <person name="Dwight S.S."/>
            <person name="Hitz B.C."/>
            <person name="Karra K."/>
            <person name="Nash R.S."/>
            <person name="Weng S."/>
            <person name="Wong E.D."/>
            <person name="Lloyd P."/>
            <person name="Skrzypek M.S."/>
            <person name="Miyasato S.R."/>
            <person name="Simison M."/>
            <person name="Cherry J.M."/>
        </authorList>
    </citation>
    <scope>GENOME REANNOTATION</scope>
    <source>
        <strain>ATCC 204508 / S288c</strain>
    </source>
</reference>
<reference key="3">
    <citation type="journal article" date="1984" name="Mol. Cell. Biol.">
        <title>Molecular cloning and nucleotide sequence analysis of the Saccharomyces cerevisiae RAD1 gene.</title>
        <authorList>
            <person name="Yang E."/>
            <person name="Friedberg E.C."/>
        </authorList>
    </citation>
    <scope>NUCLEOTIDE SEQUENCE [GENOMIC DNA] OF 1-131</scope>
</reference>
<reference key="4">
    <citation type="journal article" date="1994" name="Nat. Genet.">
        <title>Human methylenetetrahydrofolate reductase: isolation of cDNA, mapping and mutation identification.</title>
        <authorList>
            <person name="Goyette P."/>
            <person name="Sumner J.S."/>
            <person name="Milos R."/>
            <person name="Duncan A.M.V."/>
            <person name="Rosenblatt D.S."/>
            <person name="Matthews R.G."/>
            <person name="Rozen R."/>
        </authorList>
    </citation>
    <scope>IDENTIFICATION</scope>
</reference>
<reference key="5">
    <citation type="journal article" date="1994" name="Nat. Genet.">
        <authorList>
            <person name="Goyette P."/>
            <person name="Sumner J.S."/>
            <person name="Milos R."/>
            <person name="Duncan A.M.V."/>
            <person name="Rosenblatt D.S."/>
            <person name="Matthews R.G."/>
            <person name="Rozen R."/>
        </authorList>
    </citation>
    <scope>ERRATUM OF PUBMED:7920641</scope>
</reference>
<reference key="6">
    <citation type="journal article" date="2008" name="Mol. Cell. Proteomics">
        <title>A multidimensional chromatography technology for in-depth phosphoproteome analysis.</title>
        <authorList>
            <person name="Albuquerque C.P."/>
            <person name="Smolka M.B."/>
            <person name="Payne S.H."/>
            <person name="Bafna V."/>
            <person name="Eng J."/>
            <person name="Zhou H."/>
        </authorList>
    </citation>
    <scope>PHOSPHORYLATION [LARGE SCALE ANALYSIS] AT SER-120 AND SER-301</scope>
    <scope>IDENTIFICATION BY MASS SPECTROMETRY [LARGE SCALE ANALYSIS]</scope>
</reference>
<reference key="7">
    <citation type="journal article" date="2009" name="Science">
        <title>Global analysis of Cdk1 substrate phosphorylation sites provides insights into evolution.</title>
        <authorList>
            <person name="Holt L.J."/>
            <person name="Tuch B.B."/>
            <person name="Villen J."/>
            <person name="Johnson A.D."/>
            <person name="Gygi S.P."/>
            <person name="Morgan D.O."/>
        </authorList>
    </citation>
    <scope>PHOSPHORYLATION [LARGE SCALE ANALYSIS] AT SER-358</scope>
    <scope>IDENTIFICATION BY MASS SPECTROMETRY [LARGE SCALE ANALYSIS]</scope>
</reference>
<accession>P46151</accession>
<accession>D6W3Y9</accession>
<keyword id="KW-0002">3D-structure</keyword>
<keyword id="KW-0274">FAD</keyword>
<keyword id="KW-0285">Flavoprotein</keyword>
<keyword id="KW-0521">NADP</keyword>
<keyword id="KW-0560">Oxidoreductase</keyword>
<keyword id="KW-0597">Phosphoprotein</keyword>
<keyword id="KW-1185">Reference proteome</keyword>
<protein>
    <recommendedName>
        <fullName>Methylenetetrahydrofolate reductase 1</fullName>
        <ecNumber>1.5.1.20</ecNumber>
    </recommendedName>
</protein>
<proteinExistence type="evidence at protein level"/>
<gene>
    <name type="primary">MET12</name>
    <name type="ordered locus">YPL023C</name>
    <name type="ORF">LPB8C</name>
</gene>
<organism>
    <name type="scientific">Saccharomyces cerevisiae (strain ATCC 204508 / S288c)</name>
    <name type="common">Baker's yeast</name>
    <dbReference type="NCBI Taxonomy" id="559292"/>
    <lineage>
        <taxon>Eukaryota</taxon>
        <taxon>Fungi</taxon>
        <taxon>Dikarya</taxon>
        <taxon>Ascomycota</taxon>
        <taxon>Saccharomycotina</taxon>
        <taxon>Saccharomycetes</taxon>
        <taxon>Saccharomycetales</taxon>
        <taxon>Saccharomycetaceae</taxon>
        <taxon>Saccharomyces</taxon>
    </lineage>
</organism>
<evidence type="ECO:0000250" key="1"/>
<evidence type="ECO:0000256" key="2">
    <source>
        <dbReference type="SAM" id="MobiDB-lite"/>
    </source>
</evidence>
<evidence type="ECO:0000305" key="3"/>
<evidence type="ECO:0007744" key="4">
    <source>
    </source>
</evidence>
<evidence type="ECO:0007744" key="5">
    <source>
    </source>
</evidence>
<evidence type="ECO:0007829" key="6">
    <source>
        <dbReference type="PDB" id="6FNU"/>
    </source>
</evidence>